<name>SYI_ESCF3</name>
<accession>B7LVN2</accession>
<comment type="function">
    <text evidence="1">Catalyzes the attachment of isoleucine to tRNA(Ile). As IleRS can inadvertently accommodate and process structurally similar amino acids such as valine, to avoid such errors it has two additional distinct tRNA(Ile)-dependent editing activities. One activity is designated as 'pretransfer' editing and involves the hydrolysis of activated Val-AMP. The other activity is designated 'posttransfer' editing and involves deacylation of mischarged Val-tRNA(Ile).</text>
</comment>
<comment type="catalytic activity">
    <reaction evidence="1">
        <text>tRNA(Ile) + L-isoleucine + ATP = L-isoleucyl-tRNA(Ile) + AMP + diphosphate</text>
        <dbReference type="Rhea" id="RHEA:11060"/>
        <dbReference type="Rhea" id="RHEA-COMP:9666"/>
        <dbReference type="Rhea" id="RHEA-COMP:9695"/>
        <dbReference type="ChEBI" id="CHEBI:30616"/>
        <dbReference type="ChEBI" id="CHEBI:33019"/>
        <dbReference type="ChEBI" id="CHEBI:58045"/>
        <dbReference type="ChEBI" id="CHEBI:78442"/>
        <dbReference type="ChEBI" id="CHEBI:78528"/>
        <dbReference type="ChEBI" id="CHEBI:456215"/>
        <dbReference type="EC" id="6.1.1.5"/>
    </reaction>
</comment>
<comment type="cofactor">
    <cofactor evidence="1">
        <name>Zn(2+)</name>
        <dbReference type="ChEBI" id="CHEBI:29105"/>
    </cofactor>
    <text evidence="1">Binds 1 zinc ion per subunit.</text>
</comment>
<comment type="subunit">
    <text evidence="1">Monomer.</text>
</comment>
<comment type="subcellular location">
    <subcellularLocation>
        <location evidence="1">Cytoplasm</location>
    </subcellularLocation>
</comment>
<comment type="domain">
    <text evidence="1">IleRS has two distinct active sites: one for aminoacylation and one for editing. The misactivated valine is translocated from the active site to the editing site, which sterically excludes the correctly activated isoleucine. The single editing site contains two valyl binding pockets, one specific for each substrate (Val-AMP or Val-tRNA(Ile)).</text>
</comment>
<comment type="similarity">
    <text evidence="1">Belongs to the class-I aminoacyl-tRNA synthetase family. IleS type 1 subfamily.</text>
</comment>
<dbReference type="EC" id="6.1.1.5" evidence="1"/>
<dbReference type="EMBL" id="CU928158">
    <property type="protein sequence ID" value="CAQ87606.1"/>
    <property type="molecule type" value="Genomic_DNA"/>
</dbReference>
<dbReference type="RefSeq" id="WP_001286856.1">
    <property type="nucleotide sequence ID" value="NC_011740.1"/>
</dbReference>
<dbReference type="SMR" id="B7LVN2"/>
<dbReference type="GeneID" id="75058892"/>
<dbReference type="KEGG" id="efe:EFER_0018"/>
<dbReference type="HOGENOM" id="CLU_001493_7_1_6"/>
<dbReference type="OrthoDB" id="9810365at2"/>
<dbReference type="Proteomes" id="UP000000745">
    <property type="component" value="Chromosome"/>
</dbReference>
<dbReference type="GO" id="GO:0005829">
    <property type="term" value="C:cytosol"/>
    <property type="evidence" value="ECO:0007669"/>
    <property type="project" value="TreeGrafter"/>
</dbReference>
<dbReference type="GO" id="GO:0002161">
    <property type="term" value="F:aminoacyl-tRNA deacylase activity"/>
    <property type="evidence" value="ECO:0007669"/>
    <property type="project" value="InterPro"/>
</dbReference>
<dbReference type="GO" id="GO:0005524">
    <property type="term" value="F:ATP binding"/>
    <property type="evidence" value="ECO:0007669"/>
    <property type="project" value="UniProtKB-UniRule"/>
</dbReference>
<dbReference type="GO" id="GO:0004822">
    <property type="term" value="F:isoleucine-tRNA ligase activity"/>
    <property type="evidence" value="ECO:0007669"/>
    <property type="project" value="UniProtKB-UniRule"/>
</dbReference>
<dbReference type="GO" id="GO:0000049">
    <property type="term" value="F:tRNA binding"/>
    <property type="evidence" value="ECO:0007669"/>
    <property type="project" value="InterPro"/>
</dbReference>
<dbReference type="GO" id="GO:0008270">
    <property type="term" value="F:zinc ion binding"/>
    <property type="evidence" value="ECO:0007669"/>
    <property type="project" value="UniProtKB-UniRule"/>
</dbReference>
<dbReference type="GO" id="GO:0006428">
    <property type="term" value="P:isoleucyl-tRNA aminoacylation"/>
    <property type="evidence" value="ECO:0007669"/>
    <property type="project" value="UniProtKB-UniRule"/>
</dbReference>
<dbReference type="CDD" id="cd07960">
    <property type="entry name" value="Anticodon_Ia_Ile_BEm"/>
    <property type="match status" value="1"/>
</dbReference>
<dbReference type="CDD" id="cd00818">
    <property type="entry name" value="IleRS_core"/>
    <property type="match status" value="1"/>
</dbReference>
<dbReference type="FunFam" id="1.10.730.20:FF:000001">
    <property type="entry name" value="Isoleucine--tRNA ligase"/>
    <property type="match status" value="1"/>
</dbReference>
<dbReference type="FunFam" id="3.40.50.620:FF:000042">
    <property type="entry name" value="Isoleucine--tRNA ligase"/>
    <property type="match status" value="1"/>
</dbReference>
<dbReference type="FunFam" id="3.40.50.620:FF:000048">
    <property type="entry name" value="Isoleucine--tRNA ligase"/>
    <property type="match status" value="1"/>
</dbReference>
<dbReference type="FunFam" id="3.90.740.10:FF:000002">
    <property type="entry name" value="Isoleucine--tRNA ligase"/>
    <property type="match status" value="1"/>
</dbReference>
<dbReference type="Gene3D" id="1.10.730.20">
    <property type="match status" value="1"/>
</dbReference>
<dbReference type="Gene3D" id="3.40.50.620">
    <property type="entry name" value="HUPs"/>
    <property type="match status" value="2"/>
</dbReference>
<dbReference type="Gene3D" id="3.90.740.10">
    <property type="entry name" value="Valyl/Leucyl/Isoleucyl-tRNA synthetase, editing domain"/>
    <property type="match status" value="1"/>
</dbReference>
<dbReference type="HAMAP" id="MF_02002">
    <property type="entry name" value="Ile_tRNA_synth_type1"/>
    <property type="match status" value="1"/>
</dbReference>
<dbReference type="InterPro" id="IPR001412">
    <property type="entry name" value="aa-tRNA-synth_I_CS"/>
</dbReference>
<dbReference type="InterPro" id="IPR002300">
    <property type="entry name" value="aa-tRNA-synth_Ia"/>
</dbReference>
<dbReference type="InterPro" id="IPR033708">
    <property type="entry name" value="Anticodon_Ile_BEm"/>
</dbReference>
<dbReference type="InterPro" id="IPR002301">
    <property type="entry name" value="Ile-tRNA-ligase"/>
</dbReference>
<dbReference type="InterPro" id="IPR023585">
    <property type="entry name" value="Ile-tRNA-ligase_type1"/>
</dbReference>
<dbReference type="InterPro" id="IPR050081">
    <property type="entry name" value="Ile-tRNA_ligase"/>
</dbReference>
<dbReference type="InterPro" id="IPR013155">
    <property type="entry name" value="M/V/L/I-tRNA-synth_anticd-bd"/>
</dbReference>
<dbReference type="InterPro" id="IPR014729">
    <property type="entry name" value="Rossmann-like_a/b/a_fold"/>
</dbReference>
<dbReference type="InterPro" id="IPR009080">
    <property type="entry name" value="tRNAsynth_Ia_anticodon-bd"/>
</dbReference>
<dbReference type="InterPro" id="IPR009008">
    <property type="entry name" value="Val/Leu/Ile-tRNA-synth_edit"/>
</dbReference>
<dbReference type="InterPro" id="IPR010663">
    <property type="entry name" value="Znf_FPG/IleRS"/>
</dbReference>
<dbReference type="NCBIfam" id="TIGR00392">
    <property type="entry name" value="ileS"/>
    <property type="match status" value="1"/>
</dbReference>
<dbReference type="PANTHER" id="PTHR42765:SF1">
    <property type="entry name" value="ISOLEUCINE--TRNA LIGASE, MITOCHONDRIAL"/>
    <property type="match status" value="1"/>
</dbReference>
<dbReference type="PANTHER" id="PTHR42765">
    <property type="entry name" value="SOLEUCYL-TRNA SYNTHETASE"/>
    <property type="match status" value="1"/>
</dbReference>
<dbReference type="Pfam" id="PF08264">
    <property type="entry name" value="Anticodon_1"/>
    <property type="match status" value="1"/>
</dbReference>
<dbReference type="Pfam" id="PF00133">
    <property type="entry name" value="tRNA-synt_1"/>
    <property type="match status" value="1"/>
</dbReference>
<dbReference type="Pfam" id="PF06827">
    <property type="entry name" value="zf-FPG_IleRS"/>
    <property type="match status" value="1"/>
</dbReference>
<dbReference type="PRINTS" id="PR00984">
    <property type="entry name" value="TRNASYNTHILE"/>
</dbReference>
<dbReference type="SUPFAM" id="SSF47323">
    <property type="entry name" value="Anticodon-binding domain of a subclass of class I aminoacyl-tRNA synthetases"/>
    <property type="match status" value="1"/>
</dbReference>
<dbReference type="SUPFAM" id="SSF52374">
    <property type="entry name" value="Nucleotidylyl transferase"/>
    <property type="match status" value="1"/>
</dbReference>
<dbReference type="SUPFAM" id="SSF50677">
    <property type="entry name" value="ValRS/IleRS/LeuRS editing domain"/>
    <property type="match status" value="1"/>
</dbReference>
<dbReference type="PROSITE" id="PS00178">
    <property type="entry name" value="AA_TRNA_LIGASE_I"/>
    <property type="match status" value="1"/>
</dbReference>
<evidence type="ECO:0000255" key="1">
    <source>
        <dbReference type="HAMAP-Rule" id="MF_02002"/>
    </source>
</evidence>
<proteinExistence type="inferred from homology"/>
<sequence>MSDYKSTLNLPETGFPMRGDLAKREPGMLARWTDDDLYGIIRAAKKGKKTFILHDGPPYANGSIHIGHSVNKILKDIIVKSKGLSGYDSPYVPGWDCHGLPIELKVEQEYGKPGEKFTAAEFRAKCREYAATQVDGQRKDFIRLGVLGDWSHPYLTMDFKTEANIIRALGKIIGNGHLHKGAKPVHWCVDCRSALAEAEVEYYDKTSPSIDVAFQAVDQDALKAKFAVSNVNGPISLVIWTTTPWTLPANRAISIAPDFDYALVQIDGQAVILAKDLVESVMQRIGVTDYTILGTVKGAELELLRFTHPFMGFDVPAILGDHVTLDAGTGAVHTAPGHGPDDYVIGQKYGLETANPVGPDGTYLPGTYPTLDGVNVFKANDIVVALLQEKGALLHVEKMQHSYPCCWRHKTPIIFRATPQWFVSMDQKGLRAQSLKEIKGVQWIPDWGQARIESMVANRPDWCISRQRTWGVPMSLFVHKDTEELHPRTLELMEEVAKRVEVDGIQAWWDLDAKEILGDEADQYVKVPDTLDVWFDSGSTHSSVVDVRPEFAGHAADMYLEGSDQHRGWFMSSLMISTAMKGKAPYRQVLTHGFTVDGQGRKMSKSIGNTVSPQDVMNKLGADILRLWVASTDYTGEMAVSDEILKRAADSYRRIRNTARFLLANLNGFDPAKDMVKPEEMVVLDRWAVGCAKAAQEDILKAYEAYDFHEVVQRLMRFCSVEMGSFYLDIIKDRQYTAKADSVARRSCQTALYHIAEALVRWMAPILSFTADEVWGYLPGEREKYVFTGEWYEGLFGLADSEAMNDAFWDELLKVRGEVNKVIEQARADKKVGGSLEAAVTLYAEPELAAKLTALGDELRFVLLTSGATVADYNDAPADAQQSEVLKGLKVALSKAEGEKCPRCWHYTQDVGKVAEHAEICGRCVSNVAGDGEKRKFA</sequence>
<keyword id="KW-0007">Acetylation</keyword>
<keyword id="KW-0030">Aminoacyl-tRNA synthetase</keyword>
<keyword id="KW-0067">ATP-binding</keyword>
<keyword id="KW-0963">Cytoplasm</keyword>
<keyword id="KW-0436">Ligase</keyword>
<keyword id="KW-0479">Metal-binding</keyword>
<keyword id="KW-0547">Nucleotide-binding</keyword>
<keyword id="KW-0648">Protein biosynthesis</keyword>
<keyword id="KW-0862">Zinc</keyword>
<gene>
    <name evidence="1" type="primary">ileS</name>
    <name type="ordered locus">EFER_0018</name>
</gene>
<organism>
    <name type="scientific">Escherichia fergusonii (strain ATCC 35469 / DSM 13698 / CCUG 18766 / IAM 14443 / JCM 21226 / LMG 7866 / NBRC 102419 / NCTC 12128 / CDC 0568-73)</name>
    <dbReference type="NCBI Taxonomy" id="585054"/>
    <lineage>
        <taxon>Bacteria</taxon>
        <taxon>Pseudomonadati</taxon>
        <taxon>Pseudomonadota</taxon>
        <taxon>Gammaproteobacteria</taxon>
        <taxon>Enterobacterales</taxon>
        <taxon>Enterobacteriaceae</taxon>
        <taxon>Escherichia</taxon>
    </lineage>
</organism>
<reference key="1">
    <citation type="journal article" date="2009" name="PLoS Genet.">
        <title>Organised genome dynamics in the Escherichia coli species results in highly diverse adaptive paths.</title>
        <authorList>
            <person name="Touchon M."/>
            <person name="Hoede C."/>
            <person name="Tenaillon O."/>
            <person name="Barbe V."/>
            <person name="Baeriswyl S."/>
            <person name="Bidet P."/>
            <person name="Bingen E."/>
            <person name="Bonacorsi S."/>
            <person name="Bouchier C."/>
            <person name="Bouvet O."/>
            <person name="Calteau A."/>
            <person name="Chiapello H."/>
            <person name="Clermont O."/>
            <person name="Cruveiller S."/>
            <person name="Danchin A."/>
            <person name="Diard M."/>
            <person name="Dossat C."/>
            <person name="Karoui M.E."/>
            <person name="Frapy E."/>
            <person name="Garry L."/>
            <person name="Ghigo J.M."/>
            <person name="Gilles A.M."/>
            <person name="Johnson J."/>
            <person name="Le Bouguenec C."/>
            <person name="Lescat M."/>
            <person name="Mangenot S."/>
            <person name="Martinez-Jehanne V."/>
            <person name="Matic I."/>
            <person name="Nassif X."/>
            <person name="Oztas S."/>
            <person name="Petit M.A."/>
            <person name="Pichon C."/>
            <person name="Rouy Z."/>
            <person name="Ruf C.S."/>
            <person name="Schneider D."/>
            <person name="Tourret J."/>
            <person name="Vacherie B."/>
            <person name="Vallenet D."/>
            <person name="Medigue C."/>
            <person name="Rocha E.P.C."/>
            <person name="Denamur E."/>
        </authorList>
    </citation>
    <scope>NUCLEOTIDE SEQUENCE [LARGE SCALE GENOMIC DNA]</scope>
    <source>
        <strain>ATCC 35469 / DSM 13698 / BCRC 15582 / CCUG 18766 / IAM 14443 / JCM 21226 / LMG 7866 / NBRC 102419 / NCTC 12128 / CDC 0568-73</strain>
    </source>
</reference>
<protein>
    <recommendedName>
        <fullName evidence="1">Isoleucine--tRNA ligase</fullName>
        <ecNumber evidence="1">6.1.1.5</ecNumber>
    </recommendedName>
    <alternativeName>
        <fullName evidence="1">Isoleucyl-tRNA synthetase</fullName>
        <shortName evidence="1">IleRS</shortName>
    </alternativeName>
</protein>
<feature type="chain" id="PRO_1000189165" description="Isoleucine--tRNA ligase">
    <location>
        <begin position="1"/>
        <end position="938"/>
    </location>
</feature>
<feature type="short sequence motif" description="'HIGH' region">
    <location>
        <begin position="58"/>
        <end position="68"/>
    </location>
</feature>
<feature type="short sequence motif" description="'KMSKS' region">
    <location>
        <begin position="602"/>
        <end position="606"/>
    </location>
</feature>
<feature type="binding site" evidence="1">
    <location>
        <position position="561"/>
    </location>
    <ligand>
        <name>L-isoleucyl-5'-AMP</name>
        <dbReference type="ChEBI" id="CHEBI:178002"/>
    </ligand>
</feature>
<feature type="binding site" evidence="1">
    <location>
        <position position="605"/>
    </location>
    <ligand>
        <name>ATP</name>
        <dbReference type="ChEBI" id="CHEBI:30616"/>
    </ligand>
</feature>
<feature type="binding site" evidence="1">
    <location>
        <position position="901"/>
    </location>
    <ligand>
        <name>Zn(2+)</name>
        <dbReference type="ChEBI" id="CHEBI:29105"/>
    </ligand>
</feature>
<feature type="binding site" evidence="1">
    <location>
        <position position="904"/>
    </location>
    <ligand>
        <name>Zn(2+)</name>
        <dbReference type="ChEBI" id="CHEBI:29105"/>
    </ligand>
</feature>
<feature type="binding site" evidence="1">
    <location>
        <position position="921"/>
    </location>
    <ligand>
        <name>Zn(2+)</name>
        <dbReference type="ChEBI" id="CHEBI:29105"/>
    </ligand>
</feature>
<feature type="binding site" evidence="1">
    <location>
        <position position="924"/>
    </location>
    <ligand>
        <name>Zn(2+)</name>
        <dbReference type="ChEBI" id="CHEBI:29105"/>
    </ligand>
</feature>
<feature type="modified residue" description="N6-acetyllysine" evidence="1">
    <location>
        <position position="183"/>
    </location>
</feature>